<feature type="transit peptide" description="Chloroplast" evidence="2">
    <location>
        <begin position="1"/>
        <end position="49"/>
    </location>
</feature>
<feature type="chain" id="PRO_0000020610" description="Zeaxanthin epoxidase, chloroplastic">
    <location>
        <begin position="50"/>
        <end position="669"/>
    </location>
</feature>
<feature type="domain" description="FHA" evidence="3">
    <location>
        <begin position="553"/>
        <end position="617"/>
    </location>
</feature>
<feature type="binding site" evidence="2">
    <location>
        <begin position="87"/>
        <end position="115"/>
    </location>
    <ligand>
        <name>FAD</name>
        <dbReference type="ChEBI" id="CHEBI:57692"/>
    </ligand>
</feature>
<feature type="binding site" evidence="2">
    <location>
        <begin position="365"/>
        <end position="378"/>
    </location>
    <ligand>
        <name>FAD</name>
        <dbReference type="ChEBI" id="CHEBI:57692"/>
    </ligand>
</feature>
<accession>P93236</accession>
<dbReference type="EC" id="1.14.15.21"/>
<dbReference type="EMBL" id="Z83835">
    <property type="protein sequence ID" value="CAB06084.1"/>
    <property type="molecule type" value="mRNA"/>
</dbReference>
<dbReference type="PIR" id="T07754">
    <property type="entry name" value="T07754"/>
</dbReference>
<dbReference type="SMR" id="P93236"/>
<dbReference type="FunCoup" id="P93236">
    <property type="interactions" value="306"/>
</dbReference>
<dbReference type="STRING" id="4081.P93236"/>
<dbReference type="PaxDb" id="4081-Solyc02g090890.2.1"/>
<dbReference type="eggNOG" id="KOG2614">
    <property type="taxonomic scope" value="Eukaryota"/>
</dbReference>
<dbReference type="InParanoid" id="P93236"/>
<dbReference type="BRENDA" id="1.14.15.21">
    <property type="organism ID" value="3101"/>
</dbReference>
<dbReference type="UniPathway" id="UPA00090"/>
<dbReference type="Proteomes" id="UP000004994">
    <property type="component" value="Unplaced"/>
</dbReference>
<dbReference type="ExpressionAtlas" id="P93236">
    <property type="expression patterns" value="baseline and differential"/>
</dbReference>
<dbReference type="GO" id="GO:0009507">
    <property type="term" value="C:chloroplast"/>
    <property type="evidence" value="ECO:0007669"/>
    <property type="project" value="UniProtKB-SubCell"/>
</dbReference>
<dbReference type="GO" id="GO:0016020">
    <property type="term" value="C:membrane"/>
    <property type="evidence" value="ECO:0007669"/>
    <property type="project" value="InterPro"/>
</dbReference>
<dbReference type="GO" id="GO:0071949">
    <property type="term" value="F:FAD binding"/>
    <property type="evidence" value="ECO:0007669"/>
    <property type="project" value="InterPro"/>
</dbReference>
<dbReference type="GO" id="GO:0052662">
    <property type="term" value="F:zeaxanthin epoxidase activity"/>
    <property type="evidence" value="ECO:0007669"/>
    <property type="project" value="UniProtKB-EC"/>
</dbReference>
<dbReference type="GO" id="GO:0009688">
    <property type="term" value="P:abscisic acid biosynthetic process"/>
    <property type="evidence" value="ECO:0007669"/>
    <property type="project" value="UniProtKB-UniPathway"/>
</dbReference>
<dbReference type="CDD" id="cd22702">
    <property type="entry name" value="FHA_ZEP-like"/>
    <property type="match status" value="1"/>
</dbReference>
<dbReference type="Gene3D" id="2.60.200.20">
    <property type="match status" value="1"/>
</dbReference>
<dbReference type="Gene3D" id="3.50.50.60">
    <property type="entry name" value="FAD/NAD(P)-binding domain"/>
    <property type="match status" value="1"/>
</dbReference>
<dbReference type="InterPro" id="IPR002938">
    <property type="entry name" value="FAD-bd"/>
</dbReference>
<dbReference type="InterPro" id="IPR036188">
    <property type="entry name" value="FAD/NAD-bd_sf"/>
</dbReference>
<dbReference type="InterPro" id="IPR000253">
    <property type="entry name" value="FHA_dom"/>
</dbReference>
<dbReference type="InterPro" id="IPR008984">
    <property type="entry name" value="SMAD_FHA_dom_sf"/>
</dbReference>
<dbReference type="InterPro" id="IPR017079">
    <property type="entry name" value="Zeaxanthin_epoxidase"/>
</dbReference>
<dbReference type="PANTHER" id="PTHR46496">
    <property type="match status" value="1"/>
</dbReference>
<dbReference type="PANTHER" id="PTHR46496:SF1">
    <property type="entry name" value="ZEAXANTHIN EPOXIDASE, CHLOROPLASTIC"/>
    <property type="match status" value="1"/>
</dbReference>
<dbReference type="Pfam" id="PF01494">
    <property type="entry name" value="FAD_binding_3"/>
    <property type="match status" value="2"/>
</dbReference>
<dbReference type="Pfam" id="PF00498">
    <property type="entry name" value="FHA"/>
    <property type="match status" value="1"/>
</dbReference>
<dbReference type="PIRSF" id="PIRSF036989">
    <property type="entry name" value="Zeaxanthin_epoxidase"/>
    <property type="match status" value="1"/>
</dbReference>
<dbReference type="PRINTS" id="PR00420">
    <property type="entry name" value="RNGMNOXGNASE"/>
</dbReference>
<dbReference type="SMART" id="SM00240">
    <property type="entry name" value="FHA"/>
    <property type="match status" value="1"/>
</dbReference>
<dbReference type="SUPFAM" id="SSF51905">
    <property type="entry name" value="FAD/NAD(P)-binding domain"/>
    <property type="match status" value="1"/>
</dbReference>
<dbReference type="SUPFAM" id="SSF49879">
    <property type="entry name" value="SMAD/FHA domain"/>
    <property type="match status" value="1"/>
</dbReference>
<dbReference type="PROSITE" id="PS50006">
    <property type="entry name" value="FHA_DOMAIN"/>
    <property type="match status" value="1"/>
</dbReference>
<comment type="function">
    <text>Converts zeaxanthin into antheraxanthin and subsequently violaxanthin. Involved in the epoxidation of zeaxanthin. Plays an important role in resistance to stresses, seed development and dormancy.</text>
</comment>
<comment type="catalytic activity">
    <reaction>
        <text>all-trans-zeaxanthin + 4 reduced [2Fe-2S]-[ferredoxin] + 2 O2 + 4 H(+) = all-trans-violaxanthin + 4 oxidized [2Fe-2S]-[ferredoxin] + 2 H2O</text>
        <dbReference type="Rhea" id="RHEA:32443"/>
        <dbReference type="Rhea" id="RHEA-COMP:10000"/>
        <dbReference type="Rhea" id="RHEA-COMP:10001"/>
        <dbReference type="ChEBI" id="CHEBI:15377"/>
        <dbReference type="ChEBI" id="CHEBI:15378"/>
        <dbReference type="ChEBI" id="CHEBI:15379"/>
        <dbReference type="ChEBI" id="CHEBI:27547"/>
        <dbReference type="ChEBI" id="CHEBI:33737"/>
        <dbReference type="ChEBI" id="CHEBI:33738"/>
        <dbReference type="ChEBI" id="CHEBI:35288"/>
        <dbReference type="EC" id="1.14.15.21"/>
    </reaction>
</comment>
<comment type="cofactor">
    <cofactor evidence="4">
        <name>FAD</name>
        <dbReference type="ChEBI" id="CHEBI:57692"/>
    </cofactor>
</comment>
<comment type="pathway">
    <text>Plant hormone biosynthesis; abscisate biosynthesis.</text>
</comment>
<comment type="subcellular location">
    <subcellularLocation>
        <location evidence="1">Plastid</location>
        <location evidence="1">Chloroplast</location>
    </subcellularLocation>
</comment>
<name>ABA2_SOLLC</name>
<proteinExistence type="evidence at transcript level"/>
<sequence length="669" mass="73102">MYSTVFYTSVHPSTSVLSRKQLPLLISKDFSAELYHSLPCRSLENGHINKVKGVKVKATIAEAPVTPTEKTDSGANGDLKVPQKKLKVLVAGGGIGGLVFALAAKKRGFDVLVFERDLSAIRGEGQYRGPIQIQSNALAALEAIDLDVAEDIMNAGCITGQRINGLVDGISGNWYCKFDTFTPAVERGLPVTRVISRMTLQQILARAVGEEIIMNESNVVDFEDDGEKVTVVLENGQRFTGDLLVGADGIRSKVRTNLFGPSEATYSGYTCYTGIADFVPADIDTVGYRVFLGHKQYFVSSDVGGGKMQWYAFYNEPAGGADAPNGKKERLLKIFGGWCDNVIDLLVATDEDAILRRDIYDRPPTFSWGRGRVTLLGDSVHAMQPNLGQGGCMAIEDSYQLALELEKACSRSAEFGSPVDIISSLRSYESARKLRVGVIHGLARMAAIMASTYKAYLGVGLGPLSFLTQYRIPHPGRVGGRVFIDLGMPLMLSWVLGGNGDKLEGRIKHCRLSEKANDQLRKWFEDDDALERATDAEWLLLPAGNGSSGLEAIVLSRDEDVPCTVGSISHTNIPGKSIVLPLPQVSEMHARISCKDGAFFVTDLRSEHGTWVTDNEGRRYRTSPNFPTRFHPSDVIEFGSDKAAFRVKAMKFPLKTSERKEEREAVEAA</sequence>
<protein>
    <recommendedName>
        <fullName>Zeaxanthin epoxidase, chloroplastic</fullName>
        <ecNumber>1.14.15.21</ecNumber>
    </recommendedName>
</protein>
<organism>
    <name type="scientific">Solanum lycopersicum</name>
    <name type="common">Tomato</name>
    <name type="synonym">Lycopersicon esculentum</name>
    <dbReference type="NCBI Taxonomy" id="4081"/>
    <lineage>
        <taxon>Eukaryota</taxon>
        <taxon>Viridiplantae</taxon>
        <taxon>Streptophyta</taxon>
        <taxon>Embryophyta</taxon>
        <taxon>Tracheophyta</taxon>
        <taxon>Spermatophyta</taxon>
        <taxon>Magnoliopsida</taxon>
        <taxon>eudicotyledons</taxon>
        <taxon>Gunneridae</taxon>
        <taxon>Pentapetalae</taxon>
        <taxon>asterids</taxon>
        <taxon>lamiids</taxon>
        <taxon>Solanales</taxon>
        <taxon>Solanaceae</taxon>
        <taxon>Solanoideae</taxon>
        <taxon>Solaneae</taxon>
        <taxon>Solanum</taxon>
        <taxon>Solanum subgen. Lycopersicon</taxon>
    </lineage>
</organism>
<keyword id="KW-0937">Abscisic acid biosynthesis</keyword>
<keyword id="KW-0150">Chloroplast</keyword>
<keyword id="KW-0274">FAD</keyword>
<keyword id="KW-0285">Flavoprotein</keyword>
<keyword id="KW-0560">Oxidoreductase</keyword>
<keyword id="KW-0934">Plastid</keyword>
<keyword id="KW-1185">Reference proteome</keyword>
<keyword id="KW-0809">Transit peptide</keyword>
<evidence type="ECO:0000250" key="1"/>
<evidence type="ECO:0000255" key="2"/>
<evidence type="ECO:0000255" key="3">
    <source>
        <dbReference type="PROSITE-ProRule" id="PRU00086"/>
    </source>
</evidence>
<evidence type="ECO:0000305" key="4"/>
<reference key="1">
    <citation type="journal article" date="1997" name="J. Exp. Bot.">
        <title>Structure and expression of a cDNA encoding zeaxanthine epoxidase, isolated from a wilt-related tomato (Lycopersicon esculentum Mill.) library.</title>
        <authorList>
            <person name="Burbidge A."/>
            <person name="Grieve T."/>
            <person name="Terry C."/>
            <person name="Corlett J."/>
            <person name="Thompson A."/>
            <person name="Taylor I."/>
        </authorList>
    </citation>
    <scope>NUCLEOTIDE SEQUENCE [MRNA]</scope>
</reference>